<evidence type="ECO:0000255" key="1">
    <source>
        <dbReference type="HAMAP-Rule" id="MF_04068"/>
    </source>
</evidence>
<comment type="function">
    <text evidence="1">Plays critical roles in virus replication, from virus entry and uncoating to assembly and budding of the virus particle. M1 binding to ribonucleocapsids (RNPs) in nucleus seems to inhibit viral transcription. Interaction of viral NEP with M1-RNP is thought to promote nuclear export of the complex, which is targeted to the virion assembly site at the apical plasma membrane in polarized epithelial cells. Interactions with NA and HA may bring M1, a non-raft-associated protein, into lipid rafts. Forms a continuous shell on the inner side of the lipid bilayer in virion, where it binds the RNP. During virus entry into cell, the M2 ion channel acidifies the internal virion core, inducing M1 dissociation from the RNP. M1-free RNPs are transported to the nucleus, where viral transcription and replication can take place.</text>
</comment>
<comment type="function">
    <text evidence="1">Determines the virion's shape: spherical or filamentous. Clinical isolates of influenza are characterized by the presence of significant proportion of filamentous virions, whereas after multiple passage on eggs or cell culture, virions have only spherical morphology. Filamentous virions are thought to be important to infect neighboring cells, and spherical virions more suited to spread through aerosol between hosts organisms.</text>
</comment>
<comment type="subunit">
    <text evidence="1">Homodimer and homomultimer. Interacts with NEP. Binds ribonucleocapsid by both interacting with genomic RNA and NP protein. May interact with HA and NA. Cannot bind NP without genomic RNA.</text>
</comment>
<comment type="subcellular location">
    <subcellularLocation>
        <location evidence="1">Virion membrane</location>
        <topology evidence="1">Peripheral membrane protein</topology>
        <orientation evidence="1">Cytoplasmic side</orientation>
    </subcellularLocation>
    <subcellularLocation>
        <location evidence="1">Host nucleus</location>
    </subcellularLocation>
</comment>
<comment type="alternative products">
    <event type="alternative splicing"/>
    <isoform>
        <id>Q67161-1</id>
        <name>M1</name>
        <sequence type="displayed"/>
    </isoform>
    <isoform>
        <id>Q67160-1</id>
        <name>M2</name>
        <sequence type="external"/>
    </isoform>
    <text>Only the first 9 residues are shared by the 2 isoforms.</text>
</comment>
<comment type="miscellaneous">
    <text evidence="1">Most abundant protein in virion. When expressed alone can form virus-like particles in transfected cells.</text>
</comment>
<comment type="similarity">
    <text evidence="1">Belongs to the influenza viruses Matrix protein M1 family.</text>
</comment>
<proteinExistence type="inferred from homology"/>
<name>M1_I77AG</name>
<gene>
    <name evidence="1" type="primary">M</name>
</gene>
<accession>Q67161</accession>
<reference key="1">
    <citation type="journal article" date="1991" name="J. Virol.">
        <title>Evolutionary analysis of the influenza A virus M gene with comparison of the M1 and M2 proteins.</title>
        <authorList>
            <person name="Ito T."/>
            <person name="Gorman O.T."/>
            <person name="Kawaoka Y."/>
            <person name="Bean W.J."/>
            <person name="Webster R.G."/>
        </authorList>
    </citation>
    <scope>NUCLEOTIDE SEQUENCE [GENOMIC RNA]</scope>
</reference>
<keyword id="KW-0025">Alternative splicing</keyword>
<keyword id="KW-1048">Host nucleus</keyword>
<keyword id="KW-0472">Membrane</keyword>
<keyword id="KW-0694">RNA-binding</keyword>
<keyword id="KW-0468">Viral matrix protein</keyword>
<keyword id="KW-0946">Virion</keyword>
<protein>
    <recommendedName>
        <fullName evidence="1">Matrix protein 1</fullName>
        <shortName evidence="1">M1</shortName>
    </recommendedName>
</protein>
<dbReference type="EMBL" id="M63536">
    <property type="protein sequence ID" value="AAA43280.1"/>
    <property type="molecule type" value="Genomic_RNA"/>
</dbReference>
<dbReference type="SMR" id="Q67161"/>
<dbReference type="GO" id="GO:0042025">
    <property type="term" value="C:host cell nucleus"/>
    <property type="evidence" value="ECO:0007669"/>
    <property type="project" value="UniProtKB-SubCell"/>
</dbReference>
<dbReference type="GO" id="GO:0016020">
    <property type="term" value="C:membrane"/>
    <property type="evidence" value="ECO:0007669"/>
    <property type="project" value="UniProtKB-KW"/>
</dbReference>
<dbReference type="GO" id="GO:0055036">
    <property type="term" value="C:virion membrane"/>
    <property type="evidence" value="ECO:0007669"/>
    <property type="project" value="UniProtKB-SubCell"/>
</dbReference>
<dbReference type="GO" id="GO:0003723">
    <property type="term" value="F:RNA binding"/>
    <property type="evidence" value="ECO:0007669"/>
    <property type="project" value="UniProtKB-UniRule"/>
</dbReference>
<dbReference type="GO" id="GO:0039660">
    <property type="term" value="F:structural constituent of virion"/>
    <property type="evidence" value="ECO:0007669"/>
    <property type="project" value="UniProtKB-UniRule"/>
</dbReference>
<dbReference type="GO" id="GO:0046761">
    <property type="term" value="P:viral budding from plasma membrane"/>
    <property type="evidence" value="ECO:0007669"/>
    <property type="project" value="UniProtKB-UniRule"/>
</dbReference>
<dbReference type="FunFam" id="1.10.10.180:FF:000001">
    <property type="entry name" value="Matrix protein 1"/>
    <property type="match status" value="1"/>
</dbReference>
<dbReference type="FunFam" id="1.20.91.10:FF:000001">
    <property type="entry name" value="Matrix protein 1"/>
    <property type="match status" value="1"/>
</dbReference>
<dbReference type="Gene3D" id="1.10.10.180">
    <property type="match status" value="1"/>
</dbReference>
<dbReference type="Gene3D" id="1.20.91.10">
    <property type="match status" value="1"/>
</dbReference>
<dbReference type="HAMAP" id="MF_04068">
    <property type="entry name" value="INFV_M1"/>
    <property type="match status" value="1"/>
</dbReference>
<dbReference type="InterPro" id="IPR036039">
    <property type="entry name" value="Flu_matrix_M1"/>
</dbReference>
<dbReference type="InterPro" id="IPR013188">
    <property type="entry name" value="Flu_matrix_M1_C"/>
</dbReference>
<dbReference type="InterPro" id="IPR001561">
    <property type="entry name" value="Flu_matrix_M1_N"/>
</dbReference>
<dbReference type="InterPro" id="IPR015423">
    <property type="entry name" value="Flu_matrix_M1_N_sub1"/>
</dbReference>
<dbReference type="InterPro" id="IPR015799">
    <property type="entry name" value="Flu_matrix_M1_N_sub2"/>
</dbReference>
<dbReference type="InterPro" id="IPR037533">
    <property type="entry name" value="INFV_M1"/>
</dbReference>
<dbReference type="Pfam" id="PF00598">
    <property type="entry name" value="Flu_M1"/>
    <property type="match status" value="1"/>
</dbReference>
<dbReference type="Pfam" id="PF08289">
    <property type="entry name" value="Flu_M1_C"/>
    <property type="match status" value="1"/>
</dbReference>
<dbReference type="SMART" id="SM00759">
    <property type="entry name" value="Flu_M1_C"/>
    <property type="match status" value="1"/>
</dbReference>
<dbReference type="SUPFAM" id="SSF48145">
    <property type="entry name" value="Influenza virus matrix protein M1"/>
    <property type="match status" value="1"/>
</dbReference>
<organism>
    <name type="scientific">Influenza A virus (strain A/Budgerigar/Hokkaido/1/1977 H4N6)</name>
    <dbReference type="NCBI Taxonomy" id="385587"/>
    <lineage>
        <taxon>Viruses</taxon>
        <taxon>Riboviria</taxon>
        <taxon>Orthornavirae</taxon>
        <taxon>Negarnaviricota</taxon>
        <taxon>Polyploviricotina</taxon>
        <taxon>Insthoviricetes</taxon>
        <taxon>Articulavirales</taxon>
        <taxon>Orthomyxoviridae</taxon>
        <taxon>Alphainfluenzavirus</taxon>
        <taxon>Alphainfluenzavirus influenzae</taxon>
        <taxon>Influenza A virus</taxon>
    </lineage>
</organism>
<feature type="chain" id="PRO_0000326302" description="Matrix protein 1">
    <location>
        <begin position="1"/>
        <end position="252"/>
    </location>
</feature>
<feature type="region of interest" description="Membrane-binding" evidence="1">
    <location>
        <begin position="1"/>
        <end position="164"/>
    </location>
</feature>
<feature type="region of interest" description="RNP-binding" evidence="1">
    <location>
        <begin position="165"/>
        <end position="252"/>
    </location>
</feature>
<feature type="short sequence motif" description="Nuclear localization signal" evidence="1">
    <location>
        <begin position="101"/>
        <end position="105"/>
    </location>
</feature>
<sequence>MSLLTEVETYVLSIVPSGPLKAEIAQRLEDVFAGKNTDLEALMEWLKTRPILSPLTKGILGFVFTLTVPSERGLQRRRFVQNALNGNGDPNNMDRAVKLYRKLKREITFHGAKEVALSYSTGALASCMGLIYNRMGTVTTEVAFGLVCATCEQIADSQHRSHRQMVTTTNPLIRHENRMVLASHTAKAMEQMAGSSEQAAERMEVAGQARQMVQAMRTIGTHPSSSAGLKDDLLENLQAYQKRMGVQMQRFK</sequence>
<organismHost>
    <name type="scientific">Aves</name>
    <dbReference type="NCBI Taxonomy" id="8782"/>
</organismHost>
<organismHost>
    <name type="scientific">Sus scrofa</name>
    <name type="common">Pig</name>
    <dbReference type="NCBI Taxonomy" id="9823"/>
</organismHost>